<evidence type="ECO:0000250" key="1"/>
<evidence type="ECO:0000255" key="2"/>
<evidence type="ECO:0000255" key="3">
    <source>
        <dbReference type="PROSITE-ProRule" id="PRU01116"/>
    </source>
</evidence>
<evidence type="ECO:0000256" key="4">
    <source>
        <dbReference type="SAM" id="MobiDB-lite"/>
    </source>
</evidence>
<evidence type="ECO:0000305" key="5"/>
<accession>Q99V41</accession>
<dbReference type="EC" id="3.5.1.28"/>
<dbReference type="EC" id="3.2.1.96"/>
<dbReference type="EMBL" id="BA000018">
    <property type="protein sequence ID" value="BAB42150.1"/>
    <property type="molecule type" value="Genomic_DNA"/>
</dbReference>
<dbReference type="PIR" id="C89874">
    <property type="entry name" value="C89874"/>
</dbReference>
<dbReference type="RefSeq" id="WP_001074534.1">
    <property type="nucleotide sequence ID" value="NC_002745.2"/>
</dbReference>
<dbReference type="SMR" id="Q99V41"/>
<dbReference type="CAZy" id="GH73">
    <property type="family name" value="Glycoside Hydrolase Family 73"/>
</dbReference>
<dbReference type="EnsemblBacteria" id="BAB42150">
    <property type="protein sequence ID" value="BAB42150"/>
    <property type="gene ID" value="BAB42150"/>
</dbReference>
<dbReference type="KEGG" id="sau:SA0905"/>
<dbReference type="HOGENOM" id="CLU_005906_0_0_9"/>
<dbReference type="GO" id="GO:0005576">
    <property type="term" value="C:extracellular region"/>
    <property type="evidence" value="ECO:0007669"/>
    <property type="project" value="UniProtKB-SubCell"/>
</dbReference>
<dbReference type="GO" id="GO:0004040">
    <property type="term" value="F:amidase activity"/>
    <property type="evidence" value="ECO:0007669"/>
    <property type="project" value="InterPro"/>
</dbReference>
<dbReference type="GO" id="GO:0033925">
    <property type="term" value="F:mannosyl-glycoprotein endo-beta-N-acetylglucosaminidase activity"/>
    <property type="evidence" value="ECO:0007669"/>
    <property type="project" value="UniProtKB-EC"/>
</dbReference>
<dbReference type="GO" id="GO:0008745">
    <property type="term" value="F:N-acetylmuramoyl-L-alanine amidase activity"/>
    <property type="evidence" value="ECO:0007669"/>
    <property type="project" value="UniProtKB-EC"/>
</dbReference>
<dbReference type="GO" id="GO:0071555">
    <property type="term" value="P:cell wall organization"/>
    <property type="evidence" value="ECO:0007669"/>
    <property type="project" value="UniProtKB-KW"/>
</dbReference>
<dbReference type="GO" id="GO:0009253">
    <property type="term" value="P:peptidoglycan catabolic process"/>
    <property type="evidence" value="ECO:0007669"/>
    <property type="project" value="InterPro"/>
</dbReference>
<dbReference type="CDD" id="cd06583">
    <property type="entry name" value="PGRP"/>
    <property type="match status" value="1"/>
</dbReference>
<dbReference type="Gene3D" id="1.10.530.10">
    <property type="match status" value="1"/>
</dbReference>
<dbReference type="Gene3D" id="2.30.30.170">
    <property type="match status" value="7"/>
</dbReference>
<dbReference type="Gene3D" id="3.40.80.10">
    <property type="entry name" value="Peptidoglycan recognition protein-like"/>
    <property type="match status" value="1"/>
</dbReference>
<dbReference type="InterPro" id="IPR036505">
    <property type="entry name" value="Amidase/PGRP_sf"/>
</dbReference>
<dbReference type="InterPro" id="IPR002502">
    <property type="entry name" value="Amidase_domain"/>
</dbReference>
<dbReference type="InterPro" id="IPR025987">
    <property type="entry name" value="GW_dom"/>
</dbReference>
<dbReference type="InterPro" id="IPR038200">
    <property type="entry name" value="GW_dom_sf"/>
</dbReference>
<dbReference type="InterPro" id="IPR002901">
    <property type="entry name" value="MGlyc_endo_b_GlcNAc-like_dom"/>
</dbReference>
<dbReference type="Pfam" id="PF01510">
    <property type="entry name" value="Amidase_2"/>
    <property type="match status" value="1"/>
</dbReference>
<dbReference type="Pfam" id="PF01832">
    <property type="entry name" value="Glucosaminidase"/>
    <property type="match status" value="1"/>
</dbReference>
<dbReference type="Pfam" id="PF13457">
    <property type="entry name" value="GW"/>
    <property type="match status" value="6"/>
</dbReference>
<dbReference type="SMART" id="SM00644">
    <property type="entry name" value="Ami_2"/>
    <property type="match status" value="1"/>
</dbReference>
<dbReference type="SMART" id="SM00047">
    <property type="entry name" value="LYZ2"/>
    <property type="match status" value="1"/>
</dbReference>
<dbReference type="SUPFAM" id="SSF55846">
    <property type="entry name" value="N-acetylmuramoyl-L-alanine amidase-like"/>
    <property type="match status" value="1"/>
</dbReference>
<dbReference type="SUPFAM" id="SSF82057">
    <property type="entry name" value="Prokaryotic SH3-related domain"/>
    <property type="match status" value="1"/>
</dbReference>
<dbReference type="PROSITE" id="PS51780">
    <property type="entry name" value="GW"/>
    <property type="match status" value="7"/>
</dbReference>
<proteinExistence type="evidence at protein level"/>
<reference key="1">
    <citation type="journal article" date="2001" name="Lancet">
        <title>Whole genome sequencing of meticillin-resistant Staphylococcus aureus.</title>
        <authorList>
            <person name="Kuroda M."/>
            <person name="Ohta T."/>
            <person name="Uchiyama I."/>
            <person name="Baba T."/>
            <person name="Yuzawa H."/>
            <person name="Kobayashi I."/>
            <person name="Cui L."/>
            <person name="Oguchi A."/>
            <person name="Aoki K."/>
            <person name="Nagai Y."/>
            <person name="Lian J.-Q."/>
            <person name="Ito T."/>
            <person name="Kanamori M."/>
            <person name="Matsumaru H."/>
            <person name="Maruyama A."/>
            <person name="Murakami H."/>
            <person name="Hosoyama A."/>
            <person name="Mizutani-Ui Y."/>
            <person name="Takahashi N.K."/>
            <person name="Sawano T."/>
            <person name="Inoue R."/>
            <person name="Kaito C."/>
            <person name="Sekimizu K."/>
            <person name="Hirakawa H."/>
            <person name="Kuhara S."/>
            <person name="Goto S."/>
            <person name="Yabuzaki J."/>
            <person name="Kanehisa M."/>
            <person name="Yamashita A."/>
            <person name="Oshima K."/>
            <person name="Furuya K."/>
            <person name="Yoshino C."/>
            <person name="Shiba T."/>
            <person name="Hattori M."/>
            <person name="Ogasawara N."/>
            <person name="Hayashi H."/>
            <person name="Hiramatsu K."/>
        </authorList>
    </citation>
    <scope>NUCLEOTIDE SEQUENCE [LARGE SCALE GENOMIC DNA]</scope>
    <source>
        <strain>N315</strain>
    </source>
</reference>
<reference key="2">
    <citation type="submission" date="2007-10" db="UniProtKB">
        <title>Shotgun proteomic analysis of total and membrane protein extracts of S. aureus strain N315.</title>
        <authorList>
            <person name="Vaezzadeh A.R."/>
            <person name="Deshusses J."/>
            <person name="Lescuyer P."/>
            <person name="Hochstrasser D.F."/>
        </authorList>
    </citation>
    <scope>IDENTIFICATION BY MASS SPECTROMETRY [LARGE SCALE ANALYSIS]</scope>
    <source>
        <strain>N315</strain>
    </source>
</reference>
<organism>
    <name type="scientific">Staphylococcus aureus (strain N315)</name>
    <dbReference type="NCBI Taxonomy" id="158879"/>
    <lineage>
        <taxon>Bacteria</taxon>
        <taxon>Bacillati</taxon>
        <taxon>Bacillota</taxon>
        <taxon>Bacilli</taxon>
        <taxon>Bacillales</taxon>
        <taxon>Staphylococcaceae</taxon>
        <taxon>Staphylococcus</taxon>
    </lineage>
</organism>
<gene>
    <name type="primary">atl</name>
    <name type="synonym">nag</name>
    <name type="ordered locus">SA0905</name>
</gene>
<protein>
    <recommendedName>
        <fullName>Bifunctional autolysin</fullName>
    </recommendedName>
    <domain>
        <recommendedName>
            <fullName>N-acetylmuramoyl-L-alanine amidase</fullName>
            <ecNumber>3.5.1.28</ecNumber>
        </recommendedName>
    </domain>
    <domain>
        <recommendedName>
            <fullName>Mannosyl-glycoprotein endo-beta-N-acetylglucosaminidase</fullName>
            <ecNumber>3.2.1.96</ecNumber>
        </recommendedName>
    </domain>
</protein>
<feature type="signal peptide" evidence="2">
    <location>
        <begin position="1"/>
        <end position="29"/>
    </location>
</feature>
<feature type="chain" id="PRO_0000045475" description="Bifunctional autolysin">
    <location>
        <begin position="30"/>
        <end position="1248"/>
    </location>
</feature>
<feature type="domain" description="GW 1" evidence="3">
    <location>
        <begin position="435"/>
        <end position="509"/>
    </location>
</feature>
<feature type="domain" description="GW 2" evidence="3">
    <location>
        <begin position="511"/>
        <end position="585"/>
    </location>
</feature>
<feature type="domain" description="GW 3" evidence="3">
    <location>
        <begin position="604"/>
        <end position="678"/>
    </location>
</feature>
<feature type="domain" description="GW 4" evidence="3">
    <location>
        <begin position="680"/>
        <end position="754"/>
    </location>
</feature>
<feature type="domain" description="GW 5" evidence="3">
    <location>
        <begin position="776"/>
        <end position="851"/>
    </location>
</feature>
<feature type="domain" description="GW 6" evidence="3">
    <location>
        <begin position="853"/>
        <end position="928"/>
    </location>
</feature>
<feature type="domain" description="GW 7" evidence="3">
    <location>
        <begin position="935"/>
        <end position="1009"/>
    </location>
</feature>
<feature type="region of interest" description="Disordered" evidence="4">
    <location>
        <begin position="103"/>
        <end position="134"/>
    </location>
</feature>
<feature type="region of interest" description="N-acetylmuramoyl-L-alanine amidase">
    <location>
        <begin position="191"/>
        <end position="767"/>
    </location>
</feature>
<feature type="region of interest" description="Endo-beta-N-acetylglucosaminidase">
    <location>
        <begin position="768"/>
        <end position="1248"/>
    </location>
</feature>
<name>ATL_STAAN</name>
<comment type="function">
    <text evidence="1">Endohydrolysis of the di-N-acetylchitobiosyl unit in high-mannose glycopeptides and glycoproteins containing the -[(Man)5(GlcNAc)2]-Asn structure. One N-acetyl-D-glucosamine residue remains attached to the protein; the rest of the oligosaccharide is released intact. Cleaves the peptidoglycan connecting the daughter cells at the end of the cell division cycle, resulting in the separation of the two newly divided cells. Acts as an autolysin in penicillin-induced lysis (By similarity).</text>
</comment>
<comment type="catalytic activity">
    <reaction>
        <text>Hydrolyzes the link between N-acetylmuramoyl residues and L-amino acid residues in certain cell-wall glycopeptides.</text>
        <dbReference type="EC" id="3.5.1.28"/>
    </reaction>
</comment>
<comment type="catalytic activity">
    <reaction>
        <text>an N(4)-(oligosaccharide-(1-&gt;3)-[oligosaccharide-(1-&gt;6)]-beta-D-Man-(1-&gt;4)-beta-D-GlcNAc-(1-&gt;4)-alpha-D-GlcNAc)-L-asparaginyl-[protein] + H2O = an oligosaccharide-(1-&gt;3)-[oligosaccharide-(1-&gt;6)]-beta-D-Man-(1-&gt;4)-D-GlcNAc + N(4)-(N-acetyl-beta-D-glucosaminyl)-L-asparaginyl-[protein]</text>
        <dbReference type="Rhea" id="RHEA:73067"/>
        <dbReference type="Rhea" id="RHEA-COMP:12603"/>
        <dbReference type="Rhea" id="RHEA-COMP:18176"/>
        <dbReference type="ChEBI" id="CHEBI:15377"/>
        <dbReference type="ChEBI" id="CHEBI:132248"/>
        <dbReference type="ChEBI" id="CHEBI:192714"/>
        <dbReference type="ChEBI" id="CHEBI:192715"/>
        <dbReference type="EC" id="3.2.1.96"/>
    </reaction>
</comment>
<comment type="subunit">
    <text evidence="1">Oligomer; forms a ring structure at the cell surface which is important for efficient partitioning of daughter cells after cell division.</text>
</comment>
<comment type="subcellular location">
    <subcellularLocation>
        <location evidence="1">Secreted</location>
    </subcellularLocation>
    <text evidence="1">Secreted, and then anchored on the cell surface at the peripheral cell wall above the completed septum (septal region), for the next cell division cycle.</text>
</comment>
<comment type="domain">
    <text evidence="1">The GW domains are responsible for directing the proteins to the septal region.</text>
</comment>
<comment type="PTM">
    <text evidence="1">Undergoes proteolytic processing to generate the two extracellular lytic enzymes, probably at the septal region on the cell surface.</text>
</comment>
<comment type="similarity">
    <text evidence="5">In the N-terminal section; belongs to the N-acetylmuramoyl-L-alanine amidase 2 family.</text>
</comment>
<comment type="similarity">
    <text evidence="5">In the C-terminal section; belongs to the glycosyl hydrolase 73 family.</text>
</comment>
<keyword id="KW-0961">Cell wall biogenesis/degradation</keyword>
<keyword id="KW-0378">Hydrolase</keyword>
<keyword id="KW-0511">Multifunctional enzyme</keyword>
<keyword id="KW-0677">Repeat</keyword>
<keyword id="KW-0964">Secreted</keyword>
<keyword id="KW-0732">Signal</keyword>
<sequence>MAKKFNYKLPSMVALTLVGSAVTAHQVQAAETTQDQTTNKNVLDSNKVKATTEQAKAEVKNPTQNISGTQVYQDPAIVQPKTANNKTGNAQVSQKVDTAQVNGDTRANQSATTNNTQPVAKSTSTTAPKTNTNVTNAGYSLVDDEDDNSEHQINPELIKSAAKPAALETQYKAAAPKAKTEATPKVTTFSASAQPRSVAATPKTSLPKYKPQVNSSINDYIRKNNLKAPKIEEDYTSYFPKYAYRNGVGRPEGIVVHDTANDRSTINGEISYMKNNYQNAFVHAFVDGDRIIETAPTDYLSWGVGAVGNPRFINVEIVHTHDYASFARSMNNYADYAATQLQYYGLKPDSAEYDGNGTVWTHYAVSKYLGGTDHADPHGYLRSHNYSYDQLYDLINEKYLIKMGKVAPWGTQFTTTPTTPSKPTTPSKPSTGKLTVAANNGVAQIKPTNSGLYTTVYDKTGKATNEVQKTFAVSKTATLGNQKFYLVQDYNSGNKFGWVKEGDVVYNTAKSPVNVNQSYSIKSGTKLYTVPWGTSKQVAGSVSGSGNQTFKASKQQQIDKSIYLYGSVNGKSGWVSKAYLVDTAKPTPTPIPKPSTPTTNNKLTVSSLNGVAQINAKNNGLFTTVYDKTGKPTKEVQKTFAVTKEASLGGNKFYLVKDYNSPTLIGWVKQGDVIYNNAKSPVNVMQTYTVKPGTKLYSVPWGTYKQEAGAVSGTGNQTFKATKQQQIDKSIYLFGTVNGKSGWVSKAYLAVPAAPKKAVAQPKTAVKAYTVTKPQTTQTVSKIAQVKPNNTGIRASVYEKTAKNGAKYADRTFYVTKERAHGNETYVLLNNTSHNIPLGWFNVKDLNVQNLGKEVKTTQKYTVNKSNNGLSMVPWGTKNQVILTGNNIAQGTFNATKQVSVGKDVYLYGTINNRTGWVNAKDLTAPTAVKPTTSAAKDYNYTYVIKNGNGYYYVTPNSDTAKYSLKAFNEQPFAVVKEQVINGQTWYYGKLSNGKLAWIKSTDLAKELIKYNQTGMTLNQVAQIQAGLQYKPQVQRVPGKWTDANFNDVKHAMDTKRLAQDPALKYQFLRLDQPQNISIDKINQFLKGKGVLENQGAAFNKAAQMYGINEVYLISHALLETGNGTSQLAKGADVVNNKVVTNSNTKYHNVFGIAAYDNDPLREGIKYAKQAGWDTVSKAIVGGAKFIGNSYVKAGQNTLYKMRWNPAHPGTHQYATDVDWANINAKIIKGYYDKIGEVGKYFDIPQYK</sequence>